<organism>
    <name type="scientific">Listeria monocytogenes serotype 4b (strain F2365)</name>
    <dbReference type="NCBI Taxonomy" id="265669"/>
    <lineage>
        <taxon>Bacteria</taxon>
        <taxon>Bacillati</taxon>
        <taxon>Bacillota</taxon>
        <taxon>Bacilli</taxon>
        <taxon>Bacillales</taxon>
        <taxon>Listeriaceae</taxon>
        <taxon>Listeria</taxon>
    </lineage>
</organism>
<sequence>MEIKDLQDYVAIVNDWPKKGIVFKDITPLMNDGEAYRFATDKIVEYAKELKIDIIVGPEARGFIIGCPVAYALGIGFAPVRKPGKLPRETIEMEYDLEYGTNKLSMHSDAIKPGQRVLITDDLLATGGTIEATIKLVEELGGIVAGCAFLIELKELEGHKKLNGYDRLILMQL</sequence>
<evidence type="ECO:0000255" key="1">
    <source>
        <dbReference type="HAMAP-Rule" id="MF_00004"/>
    </source>
</evidence>
<reference key="1">
    <citation type="journal article" date="2004" name="Nucleic Acids Res.">
        <title>Whole genome comparisons of serotype 4b and 1/2a strains of the food-borne pathogen Listeria monocytogenes reveal new insights into the core genome components of this species.</title>
        <authorList>
            <person name="Nelson K.E."/>
            <person name="Fouts D.E."/>
            <person name="Mongodin E.F."/>
            <person name="Ravel J."/>
            <person name="DeBoy R.T."/>
            <person name="Kolonay J.F."/>
            <person name="Rasko D.A."/>
            <person name="Angiuoli S.V."/>
            <person name="Gill S.R."/>
            <person name="Paulsen I.T."/>
            <person name="Peterson J.D."/>
            <person name="White O."/>
            <person name="Nelson W.C."/>
            <person name="Nierman W.C."/>
            <person name="Beanan M.J."/>
            <person name="Brinkac L.M."/>
            <person name="Daugherty S.C."/>
            <person name="Dodson R.J."/>
            <person name="Durkin A.S."/>
            <person name="Madupu R."/>
            <person name="Haft D.H."/>
            <person name="Selengut J."/>
            <person name="Van Aken S.E."/>
            <person name="Khouri H.M."/>
            <person name="Fedorova N."/>
            <person name="Forberger H.A."/>
            <person name="Tran B."/>
            <person name="Kathariou S."/>
            <person name="Wonderling L.D."/>
            <person name="Uhlich G.A."/>
            <person name="Bayles D.O."/>
            <person name="Luchansky J.B."/>
            <person name="Fraser C.M."/>
        </authorList>
    </citation>
    <scope>NUCLEOTIDE SEQUENCE [LARGE SCALE GENOMIC DNA]</scope>
    <source>
        <strain>F2365</strain>
    </source>
</reference>
<accession>Q71ZE6</accession>
<dbReference type="EC" id="2.4.2.7" evidence="1"/>
<dbReference type="EMBL" id="AE017262">
    <property type="protein sequence ID" value="AAT04318.1"/>
    <property type="molecule type" value="Genomic_DNA"/>
</dbReference>
<dbReference type="RefSeq" id="WP_003727399.1">
    <property type="nucleotide sequence ID" value="NC_002973.6"/>
</dbReference>
<dbReference type="SMR" id="Q71ZE6"/>
<dbReference type="KEGG" id="lmf:LMOf2365_1543"/>
<dbReference type="HOGENOM" id="CLU_063339_3_0_9"/>
<dbReference type="UniPathway" id="UPA00588">
    <property type="reaction ID" value="UER00646"/>
</dbReference>
<dbReference type="GO" id="GO:0005737">
    <property type="term" value="C:cytoplasm"/>
    <property type="evidence" value="ECO:0007669"/>
    <property type="project" value="UniProtKB-SubCell"/>
</dbReference>
<dbReference type="GO" id="GO:0002055">
    <property type="term" value="F:adenine binding"/>
    <property type="evidence" value="ECO:0007669"/>
    <property type="project" value="TreeGrafter"/>
</dbReference>
<dbReference type="GO" id="GO:0003999">
    <property type="term" value="F:adenine phosphoribosyltransferase activity"/>
    <property type="evidence" value="ECO:0007669"/>
    <property type="project" value="UniProtKB-UniRule"/>
</dbReference>
<dbReference type="GO" id="GO:0016208">
    <property type="term" value="F:AMP binding"/>
    <property type="evidence" value="ECO:0007669"/>
    <property type="project" value="TreeGrafter"/>
</dbReference>
<dbReference type="GO" id="GO:0006168">
    <property type="term" value="P:adenine salvage"/>
    <property type="evidence" value="ECO:0007669"/>
    <property type="project" value="InterPro"/>
</dbReference>
<dbReference type="GO" id="GO:0044209">
    <property type="term" value="P:AMP salvage"/>
    <property type="evidence" value="ECO:0007669"/>
    <property type="project" value="UniProtKB-UniRule"/>
</dbReference>
<dbReference type="GO" id="GO:0006166">
    <property type="term" value="P:purine ribonucleoside salvage"/>
    <property type="evidence" value="ECO:0007669"/>
    <property type="project" value="UniProtKB-KW"/>
</dbReference>
<dbReference type="CDD" id="cd06223">
    <property type="entry name" value="PRTases_typeI"/>
    <property type="match status" value="1"/>
</dbReference>
<dbReference type="FunFam" id="3.40.50.2020:FF:000004">
    <property type="entry name" value="Adenine phosphoribosyltransferase"/>
    <property type="match status" value="1"/>
</dbReference>
<dbReference type="Gene3D" id="3.40.50.2020">
    <property type="match status" value="1"/>
</dbReference>
<dbReference type="HAMAP" id="MF_00004">
    <property type="entry name" value="Aden_phosphoribosyltr"/>
    <property type="match status" value="1"/>
</dbReference>
<dbReference type="InterPro" id="IPR005764">
    <property type="entry name" value="Ade_phspho_trans"/>
</dbReference>
<dbReference type="InterPro" id="IPR000836">
    <property type="entry name" value="PRibTrfase_dom"/>
</dbReference>
<dbReference type="InterPro" id="IPR029057">
    <property type="entry name" value="PRTase-like"/>
</dbReference>
<dbReference type="InterPro" id="IPR050054">
    <property type="entry name" value="UPRTase/APRTase"/>
</dbReference>
<dbReference type="NCBIfam" id="TIGR01090">
    <property type="entry name" value="apt"/>
    <property type="match status" value="1"/>
</dbReference>
<dbReference type="NCBIfam" id="NF002633">
    <property type="entry name" value="PRK02304.1-2"/>
    <property type="match status" value="1"/>
</dbReference>
<dbReference type="NCBIfam" id="NF002634">
    <property type="entry name" value="PRK02304.1-3"/>
    <property type="match status" value="1"/>
</dbReference>
<dbReference type="NCBIfam" id="NF002636">
    <property type="entry name" value="PRK02304.1-5"/>
    <property type="match status" value="1"/>
</dbReference>
<dbReference type="PANTHER" id="PTHR32315">
    <property type="entry name" value="ADENINE PHOSPHORIBOSYLTRANSFERASE"/>
    <property type="match status" value="1"/>
</dbReference>
<dbReference type="PANTHER" id="PTHR32315:SF3">
    <property type="entry name" value="ADENINE PHOSPHORIBOSYLTRANSFERASE"/>
    <property type="match status" value="1"/>
</dbReference>
<dbReference type="Pfam" id="PF00156">
    <property type="entry name" value="Pribosyltran"/>
    <property type="match status" value="1"/>
</dbReference>
<dbReference type="SUPFAM" id="SSF53271">
    <property type="entry name" value="PRTase-like"/>
    <property type="match status" value="1"/>
</dbReference>
<proteinExistence type="inferred from homology"/>
<comment type="function">
    <text evidence="1">Catalyzes a salvage reaction resulting in the formation of AMP, that is energically less costly than de novo synthesis.</text>
</comment>
<comment type="catalytic activity">
    <reaction evidence="1">
        <text>AMP + diphosphate = 5-phospho-alpha-D-ribose 1-diphosphate + adenine</text>
        <dbReference type="Rhea" id="RHEA:16609"/>
        <dbReference type="ChEBI" id="CHEBI:16708"/>
        <dbReference type="ChEBI" id="CHEBI:33019"/>
        <dbReference type="ChEBI" id="CHEBI:58017"/>
        <dbReference type="ChEBI" id="CHEBI:456215"/>
        <dbReference type="EC" id="2.4.2.7"/>
    </reaction>
</comment>
<comment type="pathway">
    <text evidence="1">Purine metabolism; AMP biosynthesis via salvage pathway; AMP from adenine: step 1/1.</text>
</comment>
<comment type="subunit">
    <text evidence="1">Homodimer.</text>
</comment>
<comment type="subcellular location">
    <subcellularLocation>
        <location evidence="1">Cytoplasm</location>
    </subcellularLocation>
</comment>
<comment type="similarity">
    <text evidence="1">Belongs to the purine/pyrimidine phosphoribosyltransferase family.</text>
</comment>
<keyword id="KW-0963">Cytoplasm</keyword>
<keyword id="KW-0328">Glycosyltransferase</keyword>
<keyword id="KW-0660">Purine salvage</keyword>
<keyword id="KW-0808">Transferase</keyword>
<gene>
    <name evidence="1" type="primary">apt</name>
    <name type="ordered locus">LMOf2365_1543</name>
</gene>
<feature type="chain" id="PRO_0000149404" description="Adenine phosphoribosyltransferase">
    <location>
        <begin position="1"/>
        <end position="173"/>
    </location>
</feature>
<name>APT_LISMF</name>
<protein>
    <recommendedName>
        <fullName evidence="1">Adenine phosphoribosyltransferase</fullName>
        <shortName evidence="1">APRT</shortName>
        <ecNumber evidence="1">2.4.2.7</ecNumber>
    </recommendedName>
</protein>